<organism>
    <name type="scientific">Xenopus laevis</name>
    <name type="common">African clawed frog</name>
    <dbReference type="NCBI Taxonomy" id="8355"/>
    <lineage>
        <taxon>Eukaryota</taxon>
        <taxon>Metazoa</taxon>
        <taxon>Chordata</taxon>
        <taxon>Craniata</taxon>
        <taxon>Vertebrata</taxon>
        <taxon>Euteleostomi</taxon>
        <taxon>Amphibia</taxon>
        <taxon>Batrachia</taxon>
        <taxon>Anura</taxon>
        <taxon>Pipoidea</taxon>
        <taxon>Pipidae</taxon>
        <taxon>Xenopodinae</taxon>
        <taxon>Xenopus</taxon>
        <taxon>Xenopus</taxon>
    </lineage>
</organism>
<name>FXL17_XENLA</name>
<proteinExistence type="evidence at transcript level"/>
<evidence type="ECO:0000250" key="1">
    <source>
        <dbReference type="UniProtKB" id="Q9UF56"/>
    </source>
</evidence>
<evidence type="ECO:0000255" key="2">
    <source>
        <dbReference type="PROSITE-ProRule" id="PRU00080"/>
    </source>
</evidence>
<evidence type="ECO:0000256" key="3">
    <source>
        <dbReference type="SAM" id="MobiDB-lite"/>
    </source>
</evidence>
<evidence type="ECO:0000269" key="4">
    <source>
    </source>
</evidence>
<evidence type="ECO:0000303" key="5">
    <source>
    </source>
</evidence>
<evidence type="ECO:0000305" key="6"/>
<evidence type="ECO:0000312" key="7">
    <source>
        <dbReference type="Xenbase" id="XB-GENE-4755769"/>
    </source>
</evidence>
<comment type="function">
    <text evidence="1 4">Substrate-recognition component of the SCF(FBXL17) E3 ubiquitin ligase complex, a key component of a quality control pathway required to ensure functional dimerization of BTB domain-containing proteins (dimerization quality control, DQC) (PubMed:30190310). FBXL17 specifically recognizes and binds a conserved degron of non-consecutive residues present at the interface of BTB dimers of aberrant composition: aberrant BTB dimer are then ubiquitinated by the SCF(FBXL17) complex and degraded by the proteasome (By similarity). The ability of the SCF(FBXL17) complex to eliminate compromised BTB dimers is required for the differentiation and survival of neural crest and neuronal cells (PubMed:30190310).</text>
</comment>
<comment type="subunit">
    <text evidence="1">Part of the SCF (SKP1-CUL1-F-box) E3 ubiquitin-protein ligase complex SCF(FBXL17). Interacts with BTB domain-containing proteins; specifically recognizes and binds a conserved degron of non-consecutive residues present at the interface of BTB dimers of aberrant composition.</text>
</comment>
<comment type="subcellular location">
    <subcellularLocation>
        <location evidence="1">Cytoplasm</location>
    </subcellularLocation>
    <subcellularLocation>
        <location evidence="1">Nucleus</location>
    </subcellularLocation>
    <text evidence="1">Present in the cytoplasm and nucleus; more abundant in the cytoplasm.</text>
</comment>
<comment type="tissue specificity">
    <text evidence="4">Expressed in the neuro-ectoderm of embryos.</text>
</comment>
<comment type="disruption phenotype">
    <text evidence="4">Impaired nervous system development caused by inability to eliminate aberrant BTB domain-containing protein dimers.</text>
</comment>
<comment type="similarity">
    <text evidence="6">Belongs to the FBXL17 family.</text>
</comment>
<comment type="sequence caution" evidence="6">
    <conflict type="erroneous gene model prediction">
        <sequence resource="EMBL-CDS" id="OCU02262"/>
    </conflict>
</comment>
<dbReference type="EMBL" id="CM004466">
    <property type="protein sequence ID" value="OCU02262.1"/>
    <property type="status" value="ALT_SEQ"/>
    <property type="molecule type" value="Genomic_DNA"/>
</dbReference>
<dbReference type="EMBL" id="BC160768">
    <property type="protein sequence ID" value="AAI60768.1"/>
    <property type="molecule type" value="mRNA"/>
</dbReference>
<dbReference type="RefSeq" id="NP_001121244.1">
    <property type="nucleotide sequence ID" value="NM_001127772.1"/>
</dbReference>
<dbReference type="SMR" id="B1H1X1"/>
<dbReference type="STRING" id="8355.B1H1X1"/>
<dbReference type="PaxDb" id="8355-B1H1X1"/>
<dbReference type="GeneID" id="100158323"/>
<dbReference type="KEGG" id="xla:100158323"/>
<dbReference type="AGR" id="Xenbase:XB-GENE-4755769"/>
<dbReference type="CTD" id="100158323"/>
<dbReference type="Xenbase" id="XB-GENE-4755769">
    <property type="gene designation" value="fbxl17.L"/>
</dbReference>
<dbReference type="OrthoDB" id="550575at2759"/>
<dbReference type="Proteomes" id="UP000186698">
    <property type="component" value="Chromosome 1L"/>
</dbReference>
<dbReference type="Proteomes" id="UP000694892">
    <property type="component" value="Chromosome 1L"/>
</dbReference>
<dbReference type="Bgee" id="100158323">
    <property type="expression patterns" value="Expressed in testis and 19 other cell types or tissues"/>
</dbReference>
<dbReference type="GO" id="GO:0005737">
    <property type="term" value="C:cytoplasm"/>
    <property type="evidence" value="ECO:0000250"/>
    <property type="project" value="UniProtKB"/>
</dbReference>
<dbReference type="GO" id="GO:0005634">
    <property type="term" value="C:nucleus"/>
    <property type="evidence" value="ECO:0000250"/>
    <property type="project" value="UniProtKB"/>
</dbReference>
<dbReference type="GO" id="GO:0019005">
    <property type="term" value="C:SCF ubiquitin ligase complex"/>
    <property type="evidence" value="ECO:0000250"/>
    <property type="project" value="UniProtKB"/>
</dbReference>
<dbReference type="GO" id="GO:0007399">
    <property type="term" value="P:nervous system development"/>
    <property type="evidence" value="ECO:0000315"/>
    <property type="project" value="UniProtKB"/>
</dbReference>
<dbReference type="GO" id="GO:0014033">
    <property type="term" value="P:neural crest cell differentiation"/>
    <property type="evidence" value="ECO:0000315"/>
    <property type="project" value="UniProtKB"/>
</dbReference>
<dbReference type="GO" id="GO:0043161">
    <property type="term" value="P:proteasome-mediated ubiquitin-dependent protein catabolic process"/>
    <property type="evidence" value="ECO:0000250"/>
    <property type="project" value="UniProtKB"/>
</dbReference>
<dbReference type="GO" id="GO:0000209">
    <property type="term" value="P:protein polyubiquitination"/>
    <property type="evidence" value="ECO:0000250"/>
    <property type="project" value="UniProtKB"/>
</dbReference>
<dbReference type="GO" id="GO:0006515">
    <property type="term" value="P:protein quality control for misfolded or incompletely synthesized proteins"/>
    <property type="evidence" value="ECO:0000250"/>
    <property type="project" value="UniProtKB"/>
</dbReference>
<dbReference type="GO" id="GO:0016567">
    <property type="term" value="P:protein ubiquitination"/>
    <property type="evidence" value="ECO:0000250"/>
    <property type="project" value="UniProtKB"/>
</dbReference>
<dbReference type="GO" id="GO:0008589">
    <property type="term" value="P:regulation of smoothened signaling pathway"/>
    <property type="evidence" value="ECO:0000250"/>
    <property type="project" value="UniProtKB"/>
</dbReference>
<dbReference type="GO" id="GO:0031146">
    <property type="term" value="P:SCF-dependent proteasomal ubiquitin-dependent protein catabolic process"/>
    <property type="evidence" value="ECO:0000250"/>
    <property type="project" value="UniProtKB"/>
</dbReference>
<dbReference type="CDD" id="cd22092">
    <property type="entry name" value="F-box_FBXO13"/>
    <property type="match status" value="1"/>
</dbReference>
<dbReference type="FunFam" id="3.80.10.10:FF:000161">
    <property type="entry name" value="F-box/LRR-repeat protein 17 isoform X1"/>
    <property type="match status" value="1"/>
</dbReference>
<dbReference type="FunFam" id="3.80.10.10:FF:000358">
    <property type="entry name" value="F-box/LRR-repeat protein 17 isoform X1"/>
    <property type="match status" value="1"/>
</dbReference>
<dbReference type="FunFam" id="1.20.1280.50:FF:000038">
    <property type="entry name" value="F-box/LRR-repeat protein 17 isoform X3"/>
    <property type="match status" value="1"/>
</dbReference>
<dbReference type="Gene3D" id="3.80.10.10">
    <property type="entry name" value="Ribonuclease Inhibitor"/>
    <property type="match status" value="2"/>
</dbReference>
<dbReference type="InterPro" id="IPR036047">
    <property type="entry name" value="F-box-like_dom_sf"/>
</dbReference>
<dbReference type="InterPro" id="IPR001810">
    <property type="entry name" value="F-box_dom"/>
</dbReference>
<dbReference type="InterPro" id="IPR050648">
    <property type="entry name" value="F-box_LRR-repeat"/>
</dbReference>
<dbReference type="InterPro" id="IPR001611">
    <property type="entry name" value="Leu-rich_rpt"/>
</dbReference>
<dbReference type="InterPro" id="IPR006553">
    <property type="entry name" value="Leu-rich_rpt_Cys-con_subtyp"/>
</dbReference>
<dbReference type="InterPro" id="IPR032675">
    <property type="entry name" value="LRR_dom_sf"/>
</dbReference>
<dbReference type="PANTHER" id="PTHR13382:SF72">
    <property type="entry name" value="F-BOX AND LEUCINE-RICH REPEAT PROTEIN 17"/>
    <property type="match status" value="1"/>
</dbReference>
<dbReference type="PANTHER" id="PTHR13382">
    <property type="entry name" value="MITOCHONDRIAL ATP SYNTHASE COUPLING FACTOR B"/>
    <property type="match status" value="1"/>
</dbReference>
<dbReference type="Pfam" id="PF12937">
    <property type="entry name" value="F-box-like"/>
    <property type="match status" value="1"/>
</dbReference>
<dbReference type="Pfam" id="PF13516">
    <property type="entry name" value="LRR_6"/>
    <property type="match status" value="1"/>
</dbReference>
<dbReference type="SMART" id="SM00256">
    <property type="entry name" value="FBOX"/>
    <property type="match status" value="1"/>
</dbReference>
<dbReference type="SMART" id="SM00367">
    <property type="entry name" value="LRR_CC"/>
    <property type="match status" value="11"/>
</dbReference>
<dbReference type="SUPFAM" id="SSF81383">
    <property type="entry name" value="F-box domain"/>
    <property type="match status" value="1"/>
</dbReference>
<dbReference type="SUPFAM" id="SSF52047">
    <property type="entry name" value="RNI-like"/>
    <property type="match status" value="1"/>
</dbReference>
<dbReference type="PROSITE" id="PS50181">
    <property type="entry name" value="FBOX"/>
    <property type="match status" value="1"/>
</dbReference>
<sequence>MGHVAPHASKKEHVAPHAAEKDHVAPHASKKEHVAPHAAEKGQVAPYAAGEGQVAPNAAGERPVAPYAAGEGQVAPYAAGEGQVAPYAAGEGQVAPYAAGEGQVAPYAAGEAQVAPHAAGEGRVAPHAAGDGQVEHCTVEDREEGHIGTTEQGHMSHYTSKLEHMAPPSAQTEAVVSYVAGERHAPPDCTVSGPAMCCSAEARQTTPDWTTTGPEISQGTLPGLTVLHVGGTWQTFAAEDEPCVTTLLSPVKPLSSSRKYAPYNLQIPSYSESEPQAHKGLSSETFGPCEPLHINQLPSSLLLKIFSNLSLNERCILASLVCKYWRDLCLDSQFWKQLDLSNRQQIKDNILEEIASRSQNITEINISDCFSVSDQGVCVVALKCPGLVKYTAYRCKQLSDISLIALAAHCPSLQKVHVGNQDKLSDEALIQMGRRCKELKDIHFGQCYKISDEGLIVIAKGCQKLQKIYMQENKLVSDESVKAFAEHCPGLQYVGFMGCSVTSEGVINLTKLKHLSSLDLRHITELDNETVMEIVKQCQHLTSLNLCLNRSINDRCVEVIAKEGRSLKELYLVTCKITDYALIAIGRYSKSIETVDVGWCKEITDYGAKQIAQSSKSIRYLGLMRCDKVNEATVEQLVQQYPHITFSTVLQDCKRTLERAYQMGWTPNASPAT</sequence>
<protein>
    <recommendedName>
        <fullName evidence="5">F-box/LRR-repeat protein 17</fullName>
    </recommendedName>
    <alternativeName>
        <fullName evidence="6">F-box and leucine-rich repeat protein 17</fullName>
    </alternativeName>
</protein>
<reference key="1">
    <citation type="journal article" date="2016" name="Nature">
        <title>Genome evolution in the allotetraploid frog Xenopus laevis.</title>
        <authorList>
            <person name="Session A.M."/>
            <person name="Uno Y."/>
            <person name="Kwon T."/>
            <person name="Chapman J.A."/>
            <person name="Toyoda A."/>
            <person name="Takahashi S."/>
            <person name="Fukui A."/>
            <person name="Hikosaka A."/>
            <person name="Suzuki A."/>
            <person name="Kondo M."/>
            <person name="van Heeringen S.J."/>
            <person name="Quigley I."/>
            <person name="Heinz S."/>
            <person name="Ogino H."/>
            <person name="Ochi H."/>
            <person name="Hellsten U."/>
            <person name="Lyons J.B."/>
            <person name="Simakov O."/>
            <person name="Putnam N."/>
            <person name="Stites J."/>
            <person name="Kuroki Y."/>
            <person name="Tanaka T."/>
            <person name="Michiue T."/>
            <person name="Watanabe M."/>
            <person name="Bogdanovic O."/>
            <person name="Lister R."/>
            <person name="Georgiou G."/>
            <person name="Paranjpe S.S."/>
            <person name="van Kruijsbergen I."/>
            <person name="Shu S."/>
            <person name="Carlson J."/>
            <person name="Kinoshita T."/>
            <person name="Ohta Y."/>
            <person name="Mawaribuchi S."/>
            <person name="Jenkins J."/>
            <person name="Grimwood J."/>
            <person name="Schmutz J."/>
            <person name="Mitros T."/>
            <person name="Mozaffari S.V."/>
            <person name="Suzuki Y."/>
            <person name="Haramoto Y."/>
            <person name="Yamamoto T.S."/>
            <person name="Takagi C."/>
            <person name="Heald R."/>
            <person name="Miller K."/>
            <person name="Haudenschild C."/>
            <person name="Kitzman J."/>
            <person name="Nakayama T."/>
            <person name="Izutsu Y."/>
            <person name="Robert J."/>
            <person name="Fortriede J."/>
            <person name="Burns K."/>
            <person name="Lotay V."/>
            <person name="Karimi K."/>
            <person name="Yasuoka Y."/>
            <person name="Dichmann D.S."/>
            <person name="Flajnik M.F."/>
            <person name="Houston D.W."/>
            <person name="Shendure J."/>
            <person name="DuPasquier L."/>
            <person name="Vize P.D."/>
            <person name="Zorn A.M."/>
            <person name="Ito M."/>
            <person name="Marcotte E.M."/>
            <person name="Wallingford J.B."/>
            <person name="Ito Y."/>
            <person name="Asashima M."/>
            <person name="Ueno N."/>
            <person name="Matsuda Y."/>
            <person name="Veenstra G.J."/>
            <person name="Fujiyama A."/>
            <person name="Harland R.M."/>
            <person name="Taira M."/>
            <person name="Rokhsar D.S."/>
        </authorList>
    </citation>
    <scope>NUCLEOTIDE SEQUENCE [LARGE SCALE GENOMIC DNA]</scope>
    <source>
        <strain>J</strain>
    </source>
</reference>
<reference key="2">
    <citation type="submission" date="2008-03" db="EMBL/GenBank/DDBJ databases">
        <authorList>
            <consortium name="NIH - Xenopus Gene Collection (XGC) project"/>
        </authorList>
    </citation>
    <scope>NUCLEOTIDE SEQUENCE [LARGE SCALE MRNA]</scope>
    <source>
        <tissue>Embryo</tissue>
    </source>
</reference>
<reference key="3">
    <citation type="journal article" date="2018" name="Science">
        <title>Dimerization quality control ensures neuronal development and survival.</title>
        <authorList>
            <person name="Mena E.L."/>
            <person name="Kjolby R.A.S."/>
            <person name="Saxton R.A."/>
            <person name="Werner A."/>
            <person name="Lew B.G."/>
            <person name="Boyle J.M."/>
            <person name="Harland R."/>
            <person name="Rape M."/>
        </authorList>
    </citation>
    <scope>FUNCTION</scope>
    <scope>TISSUE SPECIFICITY</scope>
    <scope>DISRUPTION PHENOTYPE</scope>
</reference>
<keyword id="KW-0963">Cytoplasm</keyword>
<keyword id="KW-0524">Neurogenesis</keyword>
<keyword id="KW-0539">Nucleus</keyword>
<keyword id="KW-1185">Reference proteome</keyword>
<keyword id="KW-0833">Ubl conjugation pathway</keyword>
<feature type="chain" id="PRO_0000445655" description="F-box/LRR-repeat protein 17">
    <location>
        <begin position="1"/>
        <end position="673"/>
    </location>
</feature>
<feature type="domain" description="F-box" evidence="2">
    <location>
        <begin position="291"/>
        <end position="338"/>
    </location>
</feature>
<feature type="region of interest" description="Disordered" evidence="3">
    <location>
        <begin position="1"/>
        <end position="39"/>
    </location>
</feature>
<feature type="compositionally biased region" description="Basic and acidic residues" evidence="3">
    <location>
        <begin position="9"/>
        <end position="39"/>
    </location>
</feature>
<accession>B1H1X1</accession>
<accession>A0A1L8I1L2</accession>
<gene>
    <name evidence="5 7" type="primary">fbxl17</name>
</gene>